<evidence type="ECO:0000255" key="1">
    <source>
        <dbReference type="HAMAP-Rule" id="MF_00201"/>
    </source>
</evidence>
<feature type="chain" id="PRO_1000193361" description="DNA repair protein RecO">
    <location>
        <begin position="1"/>
        <end position="241"/>
    </location>
</feature>
<gene>
    <name evidence="1" type="primary">recO</name>
    <name type="ordered locus">BVU_1391</name>
</gene>
<accession>A6L065</accession>
<reference key="1">
    <citation type="journal article" date="2007" name="PLoS Biol.">
        <title>Evolution of symbiotic bacteria in the distal human intestine.</title>
        <authorList>
            <person name="Xu J."/>
            <person name="Mahowald M.A."/>
            <person name="Ley R.E."/>
            <person name="Lozupone C.A."/>
            <person name="Hamady M."/>
            <person name="Martens E.C."/>
            <person name="Henrissat B."/>
            <person name="Coutinho P.M."/>
            <person name="Minx P."/>
            <person name="Latreille P."/>
            <person name="Cordum H."/>
            <person name="Van Brunt A."/>
            <person name="Kim K."/>
            <person name="Fulton R.S."/>
            <person name="Fulton L.A."/>
            <person name="Clifton S.W."/>
            <person name="Wilson R.K."/>
            <person name="Knight R.D."/>
            <person name="Gordon J.I."/>
        </authorList>
    </citation>
    <scope>NUCLEOTIDE SEQUENCE [LARGE SCALE GENOMIC DNA]</scope>
    <source>
        <strain>ATCC 8482 / DSM 1447 / JCM 5826 / CCUG 4940 / NBRC 14291 / NCTC 11154</strain>
    </source>
</reference>
<keyword id="KW-0227">DNA damage</keyword>
<keyword id="KW-0233">DNA recombination</keyword>
<keyword id="KW-0234">DNA repair</keyword>
<dbReference type="EMBL" id="CP000139">
    <property type="protein sequence ID" value="ABR39079.1"/>
    <property type="molecule type" value="Genomic_DNA"/>
</dbReference>
<dbReference type="RefSeq" id="WP_011965165.1">
    <property type="nucleotide sequence ID" value="NC_009614.1"/>
</dbReference>
<dbReference type="SMR" id="A6L065"/>
<dbReference type="STRING" id="435590.BVU_1391"/>
<dbReference type="PaxDb" id="435590-BVU_1391"/>
<dbReference type="GeneID" id="5302357"/>
<dbReference type="KEGG" id="bvu:BVU_1391"/>
<dbReference type="PATRIC" id="fig|435590.9.peg.1451"/>
<dbReference type="eggNOG" id="COG1381">
    <property type="taxonomic scope" value="Bacteria"/>
</dbReference>
<dbReference type="HOGENOM" id="CLU_087596_0_0_10"/>
<dbReference type="BioCyc" id="BVUL435590:G1G59-1454-MONOMER"/>
<dbReference type="Proteomes" id="UP000002861">
    <property type="component" value="Chromosome"/>
</dbReference>
<dbReference type="GO" id="GO:0043590">
    <property type="term" value="C:bacterial nucleoid"/>
    <property type="evidence" value="ECO:0007669"/>
    <property type="project" value="TreeGrafter"/>
</dbReference>
<dbReference type="GO" id="GO:0006310">
    <property type="term" value="P:DNA recombination"/>
    <property type="evidence" value="ECO:0007669"/>
    <property type="project" value="UniProtKB-UniRule"/>
</dbReference>
<dbReference type="GO" id="GO:0006302">
    <property type="term" value="P:double-strand break repair"/>
    <property type="evidence" value="ECO:0007669"/>
    <property type="project" value="TreeGrafter"/>
</dbReference>
<dbReference type="Gene3D" id="2.40.50.140">
    <property type="entry name" value="Nucleic acid-binding proteins"/>
    <property type="match status" value="1"/>
</dbReference>
<dbReference type="HAMAP" id="MF_00201">
    <property type="entry name" value="RecO"/>
    <property type="match status" value="1"/>
</dbReference>
<dbReference type="InterPro" id="IPR037278">
    <property type="entry name" value="ARFGAP/RecO"/>
</dbReference>
<dbReference type="InterPro" id="IPR022572">
    <property type="entry name" value="DNA_rep/recomb_RecO_N"/>
</dbReference>
<dbReference type="InterPro" id="IPR012340">
    <property type="entry name" value="NA-bd_OB-fold"/>
</dbReference>
<dbReference type="InterPro" id="IPR003717">
    <property type="entry name" value="RecO"/>
</dbReference>
<dbReference type="NCBIfam" id="TIGR00613">
    <property type="entry name" value="reco"/>
    <property type="match status" value="1"/>
</dbReference>
<dbReference type="PANTHER" id="PTHR33991">
    <property type="entry name" value="DNA REPAIR PROTEIN RECO"/>
    <property type="match status" value="1"/>
</dbReference>
<dbReference type="PANTHER" id="PTHR33991:SF1">
    <property type="entry name" value="DNA REPAIR PROTEIN RECO"/>
    <property type="match status" value="1"/>
</dbReference>
<dbReference type="Pfam" id="PF02565">
    <property type="entry name" value="RecO_C"/>
    <property type="match status" value="1"/>
</dbReference>
<dbReference type="Pfam" id="PF11967">
    <property type="entry name" value="RecO_N"/>
    <property type="match status" value="1"/>
</dbReference>
<dbReference type="SUPFAM" id="SSF57863">
    <property type="entry name" value="ArfGap/RecO-like zinc finger"/>
    <property type="match status" value="1"/>
</dbReference>
<dbReference type="SUPFAM" id="SSF50249">
    <property type="entry name" value="Nucleic acid-binding proteins"/>
    <property type="match status" value="1"/>
</dbReference>
<proteinExistence type="inferred from homology"/>
<protein>
    <recommendedName>
        <fullName evidence="1">DNA repair protein RecO</fullName>
    </recommendedName>
    <alternativeName>
        <fullName evidence="1">Recombination protein O</fullName>
    </alternativeName>
</protein>
<organism>
    <name type="scientific">Phocaeicola vulgatus (strain ATCC 8482 / DSM 1447 / JCM 5826 / CCUG 4940 / NBRC 14291 / NCTC 11154)</name>
    <name type="common">Bacteroides vulgatus</name>
    <dbReference type="NCBI Taxonomy" id="435590"/>
    <lineage>
        <taxon>Bacteria</taxon>
        <taxon>Pseudomonadati</taxon>
        <taxon>Bacteroidota</taxon>
        <taxon>Bacteroidia</taxon>
        <taxon>Bacteroidales</taxon>
        <taxon>Bacteroidaceae</taxon>
        <taxon>Phocaeicola</taxon>
    </lineage>
</organism>
<comment type="function">
    <text evidence="1">Involved in DNA repair and RecF pathway recombination.</text>
</comment>
<comment type="similarity">
    <text evidence="1">Belongs to the RecO family.</text>
</comment>
<sequence>MLQKTVGIVLHTLNYNDTSNIVDIYTRENGRASFLVSVPRSRKSAVKTVLFQPLSMIEFEADYRPMSNLYRIKEAKSWYPFRTLPYDPYKSSIAMFLAEFLYRALREEAENGPLFAYLEHSIRWLDECDRSFSNFHLVFLMRFSRFLGLYPNTEDYREGCFFDMLNACFVSVRPLHGAFLKPEEASRINLLMRMNYETMHLFTMSRLERNRCLVIMNDYYRLHLPDFPVLKSLDVLKELFS</sequence>
<name>RECO_PHOV8</name>